<name>LPXA_BLOFL</name>
<protein>
    <recommendedName>
        <fullName evidence="1">Acyl-[acyl-carrier-protein]--UDP-N-acetylglucosamine O-acyltransferase</fullName>
        <shortName evidence="1">UDP-N-acetylglucosamine acyltransferase</shortName>
        <ecNumber evidence="1">2.3.1.129</ecNumber>
    </recommendedName>
</protein>
<comment type="function">
    <text evidence="1">Involved in the biosynthesis of lipid A, a phosphorylated glycolipid that anchors the lipopolysaccharide to the outer membrane of the cell.</text>
</comment>
<comment type="catalytic activity">
    <reaction evidence="1">
        <text>a (3R)-hydroxyacyl-[ACP] + UDP-N-acetyl-alpha-D-glucosamine = a UDP-3-O-[(3R)-3-hydroxyacyl]-N-acetyl-alpha-D-glucosamine + holo-[ACP]</text>
        <dbReference type="Rhea" id="RHEA:67812"/>
        <dbReference type="Rhea" id="RHEA-COMP:9685"/>
        <dbReference type="Rhea" id="RHEA-COMP:9945"/>
        <dbReference type="ChEBI" id="CHEBI:57705"/>
        <dbReference type="ChEBI" id="CHEBI:64479"/>
        <dbReference type="ChEBI" id="CHEBI:78827"/>
        <dbReference type="ChEBI" id="CHEBI:173225"/>
        <dbReference type="EC" id="2.3.1.129"/>
    </reaction>
</comment>
<comment type="pathway">
    <text evidence="1">Glycolipid biosynthesis; lipid IV(A) biosynthesis; lipid IV(A) from (3R)-3-hydroxytetradecanoyl-[acyl-carrier-protein] and UDP-N-acetyl-alpha-D-glucosamine: step 1/6.</text>
</comment>
<comment type="subunit">
    <text evidence="1">Homotrimer.</text>
</comment>
<comment type="subcellular location">
    <subcellularLocation>
        <location evidence="1">Cytoplasm</location>
    </subcellularLocation>
</comment>
<comment type="similarity">
    <text evidence="1">Belongs to the transferase hexapeptide repeat family. LpxA subfamily.</text>
</comment>
<evidence type="ECO:0000255" key="1">
    <source>
        <dbReference type="HAMAP-Rule" id="MF_00387"/>
    </source>
</evidence>
<feature type="chain" id="PRO_0000302564" description="Acyl-[acyl-carrier-protein]--UDP-N-acetylglucosamine O-acyltransferase">
    <location>
        <begin position="1"/>
        <end position="262"/>
    </location>
</feature>
<reference key="1">
    <citation type="journal article" date="2003" name="Proc. Natl. Acad. Sci. U.S.A.">
        <title>The genome sequence of Blochmannia floridanus: comparative analysis of reduced genomes.</title>
        <authorList>
            <person name="Gil R."/>
            <person name="Silva F.J."/>
            <person name="Zientz E."/>
            <person name="Delmotte F."/>
            <person name="Gonzalez-Candelas F."/>
            <person name="Latorre A."/>
            <person name="Rausell C."/>
            <person name="Kamerbeek J."/>
            <person name="Gadau J."/>
            <person name="Hoelldobler B."/>
            <person name="van Ham R.C.H.J."/>
            <person name="Gross R."/>
            <person name="Moya A."/>
        </authorList>
    </citation>
    <scope>NUCLEOTIDE SEQUENCE [LARGE SCALE GENOMIC DNA]</scope>
</reference>
<gene>
    <name evidence="1" type="primary">lpxA</name>
    <name type="ordered locus">Bfl283</name>
</gene>
<keyword id="KW-0012">Acyltransferase</keyword>
<keyword id="KW-0963">Cytoplasm</keyword>
<keyword id="KW-0441">Lipid A biosynthesis</keyword>
<keyword id="KW-0444">Lipid biosynthesis</keyword>
<keyword id="KW-0443">Lipid metabolism</keyword>
<keyword id="KW-1185">Reference proteome</keyword>
<keyword id="KW-0677">Repeat</keyword>
<keyword id="KW-0808">Transferase</keyword>
<dbReference type="EC" id="2.3.1.129" evidence="1"/>
<dbReference type="EMBL" id="BX248583">
    <property type="protein sequence ID" value="CAD83354.1"/>
    <property type="molecule type" value="Genomic_DNA"/>
</dbReference>
<dbReference type="SMR" id="Q7VRD4"/>
<dbReference type="STRING" id="203907.Bfl283"/>
<dbReference type="KEGG" id="bfl:Bfl283"/>
<dbReference type="eggNOG" id="COG1043">
    <property type="taxonomic scope" value="Bacteria"/>
</dbReference>
<dbReference type="HOGENOM" id="CLU_061249_0_0_6"/>
<dbReference type="OrthoDB" id="9807278at2"/>
<dbReference type="UniPathway" id="UPA00359">
    <property type="reaction ID" value="UER00477"/>
</dbReference>
<dbReference type="Proteomes" id="UP000002192">
    <property type="component" value="Chromosome"/>
</dbReference>
<dbReference type="GO" id="GO:0005737">
    <property type="term" value="C:cytoplasm"/>
    <property type="evidence" value="ECO:0007669"/>
    <property type="project" value="UniProtKB-SubCell"/>
</dbReference>
<dbReference type="GO" id="GO:0016020">
    <property type="term" value="C:membrane"/>
    <property type="evidence" value="ECO:0007669"/>
    <property type="project" value="GOC"/>
</dbReference>
<dbReference type="GO" id="GO:0008780">
    <property type="term" value="F:acyl-[acyl-carrier-protein]-UDP-N-acetylglucosamine O-acyltransferase activity"/>
    <property type="evidence" value="ECO:0007669"/>
    <property type="project" value="UniProtKB-UniRule"/>
</dbReference>
<dbReference type="GO" id="GO:0009245">
    <property type="term" value="P:lipid A biosynthetic process"/>
    <property type="evidence" value="ECO:0007669"/>
    <property type="project" value="UniProtKB-UniRule"/>
</dbReference>
<dbReference type="CDD" id="cd03351">
    <property type="entry name" value="LbH_UDP-GlcNAc_AT"/>
    <property type="match status" value="1"/>
</dbReference>
<dbReference type="FunFam" id="2.160.10.10:FF:000003">
    <property type="entry name" value="Acyl-[acyl-carrier-protein]--UDP-N-acetylglucosamine O-acyltransferase"/>
    <property type="match status" value="1"/>
</dbReference>
<dbReference type="Gene3D" id="2.160.10.10">
    <property type="entry name" value="Hexapeptide repeat proteins"/>
    <property type="match status" value="1"/>
</dbReference>
<dbReference type="Gene3D" id="1.20.1180.10">
    <property type="entry name" value="Udp N-acetylglucosamine O-acyltransferase, C-terminal domain"/>
    <property type="match status" value="1"/>
</dbReference>
<dbReference type="HAMAP" id="MF_00387">
    <property type="entry name" value="LpxA"/>
    <property type="match status" value="1"/>
</dbReference>
<dbReference type="InterPro" id="IPR029098">
    <property type="entry name" value="Acetyltransf_C"/>
</dbReference>
<dbReference type="InterPro" id="IPR037157">
    <property type="entry name" value="Acetyltransf_C_sf"/>
</dbReference>
<dbReference type="InterPro" id="IPR001451">
    <property type="entry name" value="Hexapep"/>
</dbReference>
<dbReference type="InterPro" id="IPR018357">
    <property type="entry name" value="Hexapep_transf_CS"/>
</dbReference>
<dbReference type="InterPro" id="IPR010137">
    <property type="entry name" value="Lipid_A_LpxA"/>
</dbReference>
<dbReference type="InterPro" id="IPR011004">
    <property type="entry name" value="Trimer_LpxA-like_sf"/>
</dbReference>
<dbReference type="NCBIfam" id="TIGR01852">
    <property type="entry name" value="lipid_A_lpxA"/>
    <property type="match status" value="1"/>
</dbReference>
<dbReference type="NCBIfam" id="NF003657">
    <property type="entry name" value="PRK05289.1"/>
    <property type="match status" value="1"/>
</dbReference>
<dbReference type="PANTHER" id="PTHR43480">
    <property type="entry name" value="ACYL-[ACYL-CARRIER-PROTEIN]--UDP-N-ACETYLGLUCOSAMINE O-ACYLTRANSFERASE"/>
    <property type="match status" value="1"/>
</dbReference>
<dbReference type="PANTHER" id="PTHR43480:SF1">
    <property type="entry name" value="ACYL-[ACYL-CARRIER-PROTEIN]--UDP-N-ACETYLGLUCOSAMINE O-ACYLTRANSFERASE, MITOCHONDRIAL-RELATED"/>
    <property type="match status" value="1"/>
</dbReference>
<dbReference type="Pfam" id="PF13720">
    <property type="entry name" value="Acetyltransf_11"/>
    <property type="match status" value="1"/>
</dbReference>
<dbReference type="Pfam" id="PF00132">
    <property type="entry name" value="Hexapep"/>
    <property type="match status" value="1"/>
</dbReference>
<dbReference type="PIRSF" id="PIRSF000456">
    <property type="entry name" value="UDP-GlcNAc_acltr"/>
    <property type="match status" value="1"/>
</dbReference>
<dbReference type="SUPFAM" id="SSF51161">
    <property type="entry name" value="Trimeric LpxA-like enzymes"/>
    <property type="match status" value="1"/>
</dbReference>
<dbReference type="PROSITE" id="PS00101">
    <property type="entry name" value="HEXAPEP_TRANSFERASES"/>
    <property type="match status" value="1"/>
</dbReference>
<proteinExistence type="inferred from homology"/>
<sequence>MINRSAIVHPSSIIEEGAIIHSDVHVGPFCFIGAQVEIGARTLLKSHIVVNGITQIGEDNQIYQFASLGEVNQDLKYAKEPTRIEIGNYNQIRESVTIHRGTVQGGQVTKIGNSNLFMINVHIAHDCIIGNNCIMANNVTLGGHVKVDDYTIIGGMTAVHQFCLVGSHVMIGGCSGVVQDIPPFIIAQGNHATQFGLNIEGLKRRGFSRSAVHAIRDAYKILYRSNKTVEGAKVALKLLSTEHPIINEFVDFLTRSQRGIIR</sequence>
<organism>
    <name type="scientific">Blochmanniella floridana</name>
    <dbReference type="NCBI Taxonomy" id="203907"/>
    <lineage>
        <taxon>Bacteria</taxon>
        <taxon>Pseudomonadati</taxon>
        <taxon>Pseudomonadota</taxon>
        <taxon>Gammaproteobacteria</taxon>
        <taxon>Enterobacterales</taxon>
        <taxon>Enterobacteriaceae</taxon>
        <taxon>ant endosymbionts</taxon>
        <taxon>Candidatus Blochmanniella</taxon>
    </lineage>
</organism>
<accession>Q7VRD4</accession>